<organism>
    <name type="scientific">Daucus carota</name>
    <name type="common">Wild carrot</name>
    <dbReference type="NCBI Taxonomy" id="4039"/>
    <lineage>
        <taxon>Eukaryota</taxon>
        <taxon>Viridiplantae</taxon>
        <taxon>Streptophyta</taxon>
        <taxon>Embryophyta</taxon>
        <taxon>Tracheophyta</taxon>
        <taxon>Spermatophyta</taxon>
        <taxon>Magnoliopsida</taxon>
        <taxon>eudicotyledons</taxon>
        <taxon>Gunneridae</taxon>
        <taxon>Pentapetalae</taxon>
        <taxon>asterids</taxon>
        <taxon>campanulids</taxon>
        <taxon>Apiales</taxon>
        <taxon>Apiaceae</taxon>
        <taxon>Apioideae</taxon>
        <taxon>Scandiceae</taxon>
        <taxon>Daucinae</taxon>
        <taxon>Daucus</taxon>
        <taxon>Daucus sect. Daucus</taxon>
    </lineage>
</organism>
<feature type="signal peptide" evidence="1">
    <location>
        <begin position="1"/>
        <end position="25"/>
    </location>
</feature>
<feature type="chain" id="PRO_0000021382" description="Glycine-rich protein DC7.1">
    <location>
        <begin position="26"/>
        <end position="96"/>
    </location>
</feature>
<feature type="repeat" description="1">
    <location>
        <begin position="42"/>
        <end position="50"/>
    </location>
</feature>
<feature type="repeat" description="2">
    <location>
        <begin position="61"/>
        <end position="67"/>
    </location>
</feature>
<feature type="region of interest" description="Disordered" evidence="2">
    <location>
        <begin position="29"/>
        <end position="66"/>
    </location>
</feature>
<feature type="region of interest" description="2 approximate repeats of H-H-G(4,6)-H">
    <location>
        <begin position="42"/>
        <end position="67"/>
    </location>
</feature>
<feature type="compositionally biased region" description="Gly residues" evidence="2">
    <location>
        <begin position="43"/>
        <end position="66"/>
    </location>
</feature>
<keyword id="KW-0677">Repeat</keyword>
<keyword id="KW-0732">Signal</keyword>
<name>GRP7_DAUCA</name>
<comment type="function">
    <text>May be connected with the initiation of embryogenesis or with the metabolic changes produced by the removal of auxins.</text>
</comment>
<comment type="developmental stage">
    <text>Transiently expressed during early embryogenesis.</text>
</comment>
<comment type="induction">
    <text>By the removal of auxins.</text>
</comment>
<comment type="similarity">
    <text evidence="3">Belongs to the GRP family.</text>
</comment>
<reference key="1">
    <citation type="journal article" date="1990" name="Planta">
        <title>Gene expression during induction of somatic embryogenesis in carrot cell suspensions.</title>
        <authorList>
            <person name="Aleith F."/>
            <person name="Richter G."/>
        </authorList>
    </citation>
    <scope>NUCLEOTIDE SEQUENCE [MRNA]</scope>
</reference>
<accession>P37704</accession>
<evidence type="ECO:0000255" key="1"/>
<evidence type="ECO:0000256" key="2">
    <source>
        <dbReference type="SAM" id="MobiDB-lite"/>
    </source>
</evidence>
<evidence type="ECO:0000305" key="3"/>
<protein>
    <recommendedName>
        <fullName>Glycine-rich protein DC7.1</fullName>
    </recommendedName>
</protein>
<proteinExistence type="evidence at transcript level"/>
<dbReference type="EMBL" id="X15706">
    <property type="protein sequence ID" value="CAA33736.1"/>
    <property type="molecule type" value="mRNA"/>
</dbReference>
<dbReference type="PIR" id="S35715">
    <property type="entry name" value="S35715"/>
</dbReference>
<dbReference type="SMR" id="P37704"/>
<dbReference type="InterPro" id="IPR010800">
    <property type="entry name" value="GRP"/>
</dbReference>
<dbReference type="PANTHER" id="PTHR37389:SF16">
    <property type="entry name" value="GLYCINE-RICH CELL WALL STRUCTURAL PROTEIN"/>
    <property type="match status" value="1"/>
</dbReference>
<dbReference type="PANTHER" id="PTHR37389">
    <property type="entry name" value="NODULIN-24"/>
    <property type="match status" value="1"/>
</dbReference>
<dbReference type="Pfam" id="PF07172">
    <property type="entry name" value="GRP"/>
    <property type="match status" value="1"/>
</dbReference>
<sequence length="96" mass="9319">MGSKIFLLLGLSIAFALLISSEVAARDLSETTTEGASLDGGHHGGGGGGHYSGGGGHGGSHHGGGGHGGCHHYCHGSCCSAAEAKALEAAQVKPQN</sequence>